<protein>
    <recommendedName>
        <fullName evidence="2">Exoribonuclease 2</fullName>
        <ecNumber evidence="2">3.1.13.1</ecNumber>
    </recommendedName>
    <alternativeName>
        <fullName evidence="2">Exoribonuclease II</fullName>
        <shortName evidence="2">RNase II</shortName>
        <shortName evidence="2">Ribonuclease II</shortName>
    </alternativeName>
</protein>
<dbReference type="EC" id="3.1.13.1" evidence="2"/>
<dbReference type="EMBL" id="CP000238">
    <property type="protein sequence ID" value="ABF14302.1"/>
    <property type="molecule type" value="Genomic_DNA"/>
</dbReference>
<dbReference type="RefSeq" id="WP_011520479.1">
    <property type="nucleotide sequence ID" value="NC_007984.1"/>
</dbReference>
<dbReference type="SMR" id="Q1LTG8"/>
<dbReference type="STRING" id="374463.BCI_0297"/>
<dbReference type="KEGG" id="bci:BCI_0297"/>
<dbReference type="HOGENOM" id="CLU_002333_7_3_6"/>
<dbReference type="OrthoDB" id="9764149at2"/>
<dbReference type="Proteomes" id="UP000002427">
    <property type="component" value="Chromosome"/>
</dbReference>
<dbReference type="GO" id="GO:0005829">
    <property type="term" value="C:cytosol"/>
    <property type="evidence" value="ECO:0007669"/>
    <property type="project" value="UniProtKB-ARBA"/>
</dbReference>
<dbReference type="GO" id="GO:0008859">
    <property type="term" value="F:exoribonuclease II activity"/>
    <property type="evidence" value="ECO:0007669"/>
    <property type="project" value="UniProtKB-UniRule"/>
</dbReference>
<dbReference type="GO" id="GO:0003723">
    <property type="term" value="F:RNA binding"/>
    <property type="evidence" value="ECO:0007669"/>
    <property type="project" value="UniProtKB-KW"/>
</dbReference>
<dbReference type="GO" id="GO:0006402">
    <property type="term" value="P:mRNA catabolic process"/>
    <property type="evidence" value="ECO:0007669"/>
    <property type="project" value="UniProtKB-UniRule"/>
</dbReference>
<dbReference type="Gene3D" id="2.40.50.640">
    <property type="match status" value="1"/>
</dbReference>
<dbReference type="Gene3D" id="2.40.50.140">
    <property type="entry name" value="Nucleic acid-binding proteins"/>
    <property type="match status" value="2"/>
</dbReference>
<dbReference type="HAMAP" id="MF_01036">
    <property type="entry name" value="RNase_II"/>
    <property type="match status" value="1"/>
</dbReference>
<dbReference type="InterPro" id="IPR011129">
    <property type="entry name" value="CSD"/>
</dbReference>
<dbReference type="InterPro" id="IPR012340">
    <property type="entry name" value="NA-bd_OB-fold"/>
</dbReference>
<dbReference type="InterPro" id="IPR013223">
    <property type="entry name" value="RNase_B_OB_dom"/>
</dbReference>
<dbReference type="InterPro" id="IPR011804">
    <property type="entry name" value="RNase_II"/>
</dbReference>
<dbReference type="InterPro" id="IPR001900">
    <property type="entry name" value="RNase_II/R"/>
</dbReference>
<dbReference type="InterPro" id="IPR022966">
    <property type="entry name" value="RNase_II/R_CS"/>
</dbReference>
<dbReference type="InterPro" id="IPR004476">
    <property type="entry name" value="RNase_II/RNase_R"/>
</dbReference>
<dbReference type="InterPro" id="IPR050180">
    <property type="entry name" value="RNR_Ribonuclease"/>
</dbReference>
<dbReference type="InterPro" id="IPR003029">
    <property type="entry name" value="S1_domain"/>
</dbReference>
<dbReference type="NCBIfam" id="TIGR00358">
    <property type="entry name" value="3_prime_RNase"/>
    <property type="match status" value="1"/>
</dbReference>
<dbReference type="NCBIfam" id="NF003455">
    <property type="entry name" value="PRK05054.1"/>
    <property type="match status" value="1"/>
</dbReference>
<dbReference type="NCBIfam" id="TIGR02062">
    <property type="entry name" value="RNase_B"/>
    <property type="match status" value="1"/>
</dbReference>
<dbReference type="PANTHER" id="PTHR23355:SF37">
    <property type="entry name" value="EXORIBONUCLEASE 2"/>
    <property type="match status" value="1"/>
</dbReference>
<dbReference type="PANTHER" id="PTHR23355">
    <property type="entry name" value="RIBONUCLEASE"/>
    <property type="match status" value="1"/>
</dbReference>
<dbReference type="Pfam" id="PF08206">
    <property type="entry name" value="OB_RNB"/>
    <property type="match status" value="1"/>
</dbReference>
<dbReference type="Pfam" id="PF00773">
    <property type="entry name" value="RNB"/>
    <property type="match status" value="1"/>
</dbReference>
<dbReference type="Pfam" id="PF00575">
    <property type="entry name" value="S1"/>
    <property type="match status" value="1"/>
</dbReference>
<dbReference type="SMART" id="SM00357">
    <property type="entry name" value="CSP"/>
    <property type="match status" value="1"/>
</dbReference>
<dbReference type="SMART" id="SM00955">
    <property type="entry name" value="RNB"/>
    <property type="match status" value="1"/>
</dbReference>
<dbReference type="SUPFAM" id="SSF50249">
    <property type="entry name" value="Nucleic acid-binding proteins"/>
    <property type="match status" value="4"/>
</dbReference>
<dbReference type="PROSITE" id="PS01175">
    <property type="entry name" value="RIBONUCLEASE_II"/>
    <property type="match status" value="1"/>
</dbReference>
<name>RNB_BAUCH</name>
<keyword id="KW-0963">Cytoplasm</keyword>
<keyword id="KW-0269">Exonuclease</keyword>
<keyword id="KW-0378">Hydrolase</keyword>
<keyword id="KW-0540">Nuclease</keyword>
<keyword id="KW-1185">Reference proteome</keyword>
<keyword id="KW-0694">RNA-binding</keyword>
<accession>Q1LTG8</accession>
<evidence type="ECO:0000255" key="1"/>
<evidence type="ECO:0000255" key="2">
    <source>
        <dbReference type="HAMAP-Rule" id="MF_01036"/>
    </source>
</evidence>
<proteinExistence type="inferred from homology"/>
<reference key="1">
    <citation type="journal article" date="2006" name="PLoS Biol.">
        <title>Metabolic complementarity and genomics of the dual bacterial symbiosis of sharpshooters.</title>
        <authorList>
            <person name="Wu D."/>
            <person name="Daugherty S.C."/>
            <person name="Van Aken S.E."/>
            <person name="Pai G.H."/>
            <person name="Watkins K.L."/>
            <person name="Khouri H."/>
            <person name="Tallon L.J."/>
            <person name="Zaborsky J.M."/>
            <person name="Dunbar H.E."/>
            <person name="Tran P.L."/>
            <person name="Moran N.A."/>
            <person name="Eisen J.A."/>
        </authorList>
    </citation>
    <scope>NUCLEOTIDE SEQUENCE [LARGE SCALE GENOMIC DNA]</scope>
</reference>
<sequence length="645" mass="74194">MFQDHPLLIQLKQQLYDKELRMVGVVKSTDKGFGFLEVNAQKSYFIPPLFMKKVMHGDKISAVLRIVNNRAIAEPETLIEPFLSRFVGKVQIKNDKLALLPKHPLIKEIIPASQPRSMKNTQLCHGDWVIAEMCHHPLDGYRYFYAKITELITTKDDNFAHWRVTLAHYNLEREAPAMPKYLTIQDNGLIREDLTELNFITIDHASTEDIDDALHVAYGTNGALVLTIAIADPTAWIIAGSQLDCIARDRAFTNYLPGFNIPMLPRMLSEDLCSLRAYEKRPALVCQVTMQHDGTLNEDMRFFAAWIESKAKLSYDEVSDWIENIGFWQPQNNAIAEQIRMLHIVCQARSSWRKQHALVFKDKPDYRFILEENGNVKNIIAEPRRIAKRMIEEAMITANICAARVLRDNLGFGLYNTHNGFDTTLIDQVVAILQKHNISVDATQLLTLEGFCALRRKLNTMSTSYLDSRIRRFQTLSELKTEPGPHFGLGLEVYATWTSPIRKYSDMMNHRLLKALIGAGKAERPKTDITFRMSERRRQNRIAERDVEDWLYASFLKNQVGSHIRYSAEIIDIYRNGMRIRLLDNGAIAFIPALLIHNIRDELICNQDIGIVQIQGKERYRQGDTIEVYIKEVHIDNRSIIAKIV</sequence>
<comment type="function">
    <text evidence="2">Involved in mRNA degradation. Hydrolyzes single-stranded polyribonucleotides processively in the 3' to 5' direction.</text>
</comment>
<comment type="catalytic activity">
    <reaction evidence="2">
        <text>Exonucleolytic cleavage in the 3'- to 5'-direction to yield nucleoside 5'-phosphates.</text>
        <dbReference type="EC" id="3.1.13.1"/>
    </reaction>
</comment>
<comment type="subcellular location">
    <subcellularLocation>
        <location evidence="2">Cytoplasm</location>
    </subcellularLocation>
</comment>
<comment type="similarity">
    <text evidence="2">Belongs to the RNR ribonuclease family. RNase II subfamily.</text>
</comment>
<organism>
    <name type="scientific">Baumannia cicadellinicola subsp. Homalodisca coagulata</name>
    <dbReference type="NCBI Taxonomy" id="374463"/>
    <lineage>
        <taxon>Bacteria</taxon>
        <taxon>Pseudomonadati</taxon>
        <taxon>Pseudomonadota</taxon>
        <taxon>Gammaproteobacteria</taxon>
        <taxon>Candidatus Palibaumannia</taxon>
    </lineage>
</organism>
<gene>
    <name evidence="2" type="primary">rnb</name>
    <name type="ordered locus">BCI_0297</name>
</gene>
<feature type="chain" id="PRO_0000409533" description="Exoribonuclease 2">
    <location>
        <begin position="1"/>
        <end position="645"/>
    </location>
</feature>
<feature type="domain" description="RNB" evidence="1">
    <location>
        <begin position="191"/>
        <end position="517"/>
    </location>
</feature>
<feature type="domain" description="S1 motif" evidence="2">
    <location>
        <begin position="563"/>
        <end position="645"/>
    </location>
</feature>